<protein>
    <recommendedName>
        <fullName evidence="1">Vitamin B12 import system permease protein BtuC</fullName>
    </recommendedName>
</protein>
<evidence type="ECO:0000255" key="1">
    <source>
        <dbReference type="HAMAP-Rule" id="MF_01004"/>
    </source>
</evidence>
<organism>
    <name type="scientific">Escherichia coli (strain SMS-3-5 / SECEC)</name>
    <dbReference type="NCBI Taxonomy" id="439855"/>
    <lineage>
        <taxon>Bacteria</taxon>
        <taxon>Pseudomonadati</taxon>
        <taxon>Pseudomonadota</taxon>
        <taxon>Gammaproteobacteria</taxon>
        <taxon>Enterobacterales</taxon>
        <taxon>Enterobacteriaceae</taxon>
        <taxon>Escherichia</taxon>
    </lineage>
</organism>
<proteinExistence type="inferred from homology"/>
<accession>B1LE19</accession>
<feature type="chain" id="PRO_1000201544" description="Vitamin B12 import system permease protein BtuC">
    <location>
        <begin position="1"/>
        <end position="326"/>
    </location>
</feature>
<feature type="transmembrane region" description="Helical" evidence="1">
    <location>
        <begin position="15"/>
        <end position="35"/>
    </location>
</feature>
<feature type="transmembrane region" description="Helical" evidence="1">
    <location>
        <begin position="61"/>
        <end position="81"/>
    </location>
</feature>
<feature type="transmembrane region" description="Helical" evidence="1">
    <location>
        <begin position="88"/>
        <end position="108"/>
    </location>
</feature>
<feature type="transmembrane region" description="Helical" evidence="1">
    <location>
        <begin position="112"/>
        <end position="132"/>
    </location>
</feature>
<feature type="transmembrane region" description="Helical" evidence="1">
    <location>
        <begin position="146"/>
        <end position="166"/>
    </location>
</feature>
<feature type="transmembrane region" description="Helical" evidence="1">
    <location>
        <begin position="184"/>
        <end position="204"/>
    </location>
</feature>
<feature type="transmembrane region" description="Helical" evidence="1">
    <location>
        <begin position="240"/>
        <end position="260"/>
    </location>
</feature>
<feature type="transmembrane region" description="Helical" evidence="1">
    <location>
        <begin position="274"/>
        <end position="294"/>
    </location>
</feature>
<feature type="transmembrane region" description="Helical" evidence="1">
    <location>
        <begin position="302"/>
        <end position="322"/>
    </location>
</feature>
<sequence length="326" mass="34949">MLTLARQQQRQNIRWLLCLSVLMLLALLLSLCAGEQWISPGDWFTPRGELFVWQIRLPRTLAVLLVGAALAISGAVMQALFENPLAEPGLLGVSNGAGVGLIAAVLLGQGQLPNWALGLCAIAGALIITLILLRFARRHLSTSRLLLAGVALGIICSALMTWAIYFSTSVDLRQLMYWMMGGFGGVDWRQSWLMLALIPVLLWICCQSRPMNMLALGEISARQLGLPLWFWRNVLVAATGWMVGVSVALAGAIGFIGLVIPHILRLCGLTDHRVLLPGCALAGASALLLADIVARLALAAAELPIGVVTATLGAPVFIWLLLKAGR</sequence>
<dbReference type="EMBL" id="CP000970">
    <property type="protein sequence ID" value="ACB19485.1"/>
    <property type="molecule type" value="Genomic_DNA"/>
</dbReference>
<dbReference type="RefSeq" id="WP_000956528.1">
    <property type="nucleotide sequence ID" value="NC_010498.1"/>
</dbReference>
<dbReference type="SMR" id="B1LE19"/>
<dbReference type="KEGG" id="ecm:EcSMS35_1479"/>
<dbReference type="HOGENOM" id="CLU_013016_0_3_6"/>
<dbReference type="Proteomes" id="UP000007011">
    <property type="component" value="Chromosome"/>
</dbReference>
<dbReference type="GO" id="GO:0005886">
    <property type="term" value="C:plasma membrane"/>
    <property type="evidence" value="ECO:0007669"/>
    <property type="project" value="UniProtKB-SubCell"/>
</dbReference>
<dbReference type="GO" id="GO:0090482">
    <property type="term" value="F:vitamin transmembrane transporter activity"/>
    <property type="evidence" value="ECO:0007669"/>
    <property type="project" value="UniProtKB-UniRule"/>
</dbReference>
<dbReference type="GO" id="GO:0015889">
    <property type="term" value="P:cobalamin transport"/>
    <property type="evidence" value="ECO:0007669"/>
    <property type="project" value="UniProtKB-UniRule"/>
</dbReference>
<dbReference type="CDD" id="cd06550">
    <property type="entry name" value="TM_ABC_iron-siderophores_like"/>
    <property type="match status" value="1"/>
</dbReference>
<dbReference type="FunFam" id="1.10.3470.10:FF:000001">
    <property type="entry name" value="Vitamin B12 ABC transporter permease BtuC"/>
    <property type="match status" value="1"/>
</dbReference>
<dbReference type="Gene3D" id="1.10.3470.10">
    <property type="entry name" value="ABC transporter involved in vitamin B12 uptake, BtuC"/>
    <property type="match status" value="1"/>
</dbReference>
<dbReference type="HAMAP" id="MF_01004">
    <property type="entry name" value="BtuC"/>
    <property type="match status" value="1"/>
</dbReference>
<dbReference type="InterPro" id="IPR037294">
    <property type="entry name" value="ABC_BtuC-like"/>
</dbReference>
<dbReference type="InterPro" id="IPR023691">
    <property type="entry name" value="ABC_transptr_BtuC"/>
</dbReference>
<dbReference type="InterPro" id="IPR000522">
    <property type="entry name" value="ABC_transptr_permease_BtuC"/>
</dbReference>
<dbReference type="NCBIfam" id="NF003001">
    <property type="entry name" value="PRK03784.1"/>
    <property type="match status" value="1"/>
</dbReference>
<dbReference type="PANTHER" id="PTHR30472">
    <property type="entry name" value="FERRIC ENTEROBACTIN TRANSPORT SYSTEM PERMEASE PROTEIN"/>
    <property type="match status" value="1"/>
</dbReference>
<dbReference type="PANTHER" id="PTHR30472:SF29">
    <property type="entry name" value="VITAMIN B12 IMPORT SYSTEM PERMEASE PROTEIN BTUC"/>
    <property type="match status" value="1"/>
</dbReference>
<dbReference type="Pfam" id="PF01032">
    <property type="entry name" value="FecCD"/>
    <property type="match status" value="1"/>
</dbReference>
<dbReference type="SUPFAM" id="SSF81345">
    <property type="entry name" value="ABC transporter involved in vitamin B12 uptake, BtuC"/>
    <property type="match status" value="1"/>
</dbReference>
<keyword id="KW-0997">Cell inner membrane</keyword>
<keyword id="KW-1003">Cell membrane</keyword>
<keyword id="KW-0472">Membrane</keyword>
<keyword id="KW-0812">Transmembrane</keyword>
<keyword id="KW-1133">Transmembrane helix</keyword>
<keyword id="KW-0813">Transport</keyword>
<gene>
    <name evidence="1" type="primary">btuC</name>
    <name type="ordered locus">EcSMS35_1479</name>
</gene>
<name>BTUC_ECOSM</name>
<reference key="1">
    <citation type="journal article" date="2008" name="J. Bacteriol.">
        <title>Insights into the environmental resistance gene pool from the genome sequence of the multidrug-resistant environmental isolate Escherichia coli SMS-3-5.</title>
        <authorList>
            <person name="Fricke W.F."/>
            <person name="Wright M.S."/>
            <person name="Lindell A.H."/>
            <person name="Harkins D.M."/>
            <person name="Baker-Austin C."/>
            <person name="Ravel J."/>
            <person name="Stepanauskas R."/>
        </authorList>
    </citation>
    <scope>NUCLEOTIDE SEQUENCE [LARGE SCALE GENOMIC DNA]</scope>
    <source>
        <strain>SMS-3-5 / SECEC</strain>
    </source>
</reference>
<comment type="function">
    <text evidence="1">Part of the ABC transporter complex BtuCDF involved in vitamin B12 import. Involved in the translocation of the substrate across the membrane.</text>
</comment>
<comment type="subunit">
    <text evidence="1">The complex is composed of two ATP-binding proteins (BtuD), two transmembrane proteins (BtuC) and a solute-binding protein (BtuF).</text>
</comment>
<comment type="subcellular location">
    <subcellularLocation>
        <location evidence="1">Cell inner membrane</location>
        <topology evidence="1">Multi-pass membrane protein</topology>
    </subcellularLocation>
</comment>
<comment type="similarity">
    <text evidence="1">Belongs to the binding-protein-dependent transport system permease family. FecCD subfamily.</text>
</comment>